<feature type="chain" id="PRO_1000038804" description="Lipoprotein signal peptidase">
    <location>
        <begin position="1"/>
        <end position="173"/>
    </location>
</feature>
<feature type="transmembrane region" description="Helical" evidence="1">
    <location>
        <begin position="67"/>
        <end position="87"/>
    </location>
</feature>
<feature type="transmembrane region" description="Helical" evidence="1">
    <location>
        <begin position="92"/>
        <end position="112"/>
    </location>
</feature>
<feature type="transmembrane region" description="Helical" evidence="1">
    <location>
        <begin position="125"/>
        <end position="145"/>
    </location>
</feature>
<feature type="region of interest" description="Disordered" evidence="2">
    <location>
        <begin position="151"/>
        <end position="173"/>
    </location>
</feature>
<feature type="compositionally biased region" description="Basic and acidic residues" evidence="2">
    <location>
        <begin position="163"/>
        <end position="173"/>
    </location>
</feature>
<feature type="active site" evidence="1">
    <location>
        <position position="116"/>
    </location>
</feature>
<feature type="active site" evidence="1">
    <location>
        <position position="132"/>
    </location>
</feature>
<dbReference type="EC" id="3.4.23.36" evidence="1"/>
<dbReference type="EMBL" id="BA000045">
    <property type="protein sequence ID" value="BAC88013.1"/>
    <property type="molecule type" value="Genomic_DNA"/>
</dbReference>
<dbReference type="RefSeq" id="NP_923018.1">
    <property type="nucleotide sequence ID" value="NC_005125.1"/>
</dbReference>
<dbReference type="RefSeq" id="WP_011140076.1">
    <property type="nucleotide sequence ID" value="NC_005125.1"/>
</dbReference>
<dbReference type="SMR" id="Q7NPI3"/>
<dbReference type="FunCoup" id="Q7NPI3">
    <property type="interactions" value="82"/>
</dbReference>
<dbReference type="STRING" id="251221.gene:10757541"/>
<dbReference type="EnsemblBacteria" id="BAC88013">
    <property type="protein sequence ID" value="BAC88013"/>
    <property type="gene ID" value="BAC88013"/>
</dbReference>
<dbReference type="KEGG" id="gvi:glr0072"/>
<dbReference type="PATRIC" id="fig|251221.4.peg.75"/>
<dbReference type="eggNOG" id="COG0597">
    <property type="taxonomic scope" value="Bacteria"/>
</dbReference>
<dbReference type="HOGENOM" id="CLU_083252_3_2_3"/>
<dbReference type="InParanoid" id="Q7NPI3"/>
<dbReference type="OrthoDB" id="9810259at2"/>
<dbReference type="PhylomeDB" id="Q7NPI3"/>
<dbReference type="UniPathway" id="UPA00665"/>
<dbReference type="Proteomes" id="UP000000557">
    <property type="component" value="Chromosome"/>
</dbReference>
<dbReference type="GO" id="GO:0005886">
    <property type="term" value="C:plasma membrane"/>
    <property type="evidence" value="ECO:0000318"/>
    <property type="project" value="GO_Central"/>
</dbReference>
<dbReference type="GO" id="GO:0004190">
    <property type="term" value="F:aspartic-type endopeptidase activity"/>
    <property type="evidence" value="ECO:0007669"/>
    <property type="project" value="UniProtKB-UniRule"/>
</dbReference>
<dbReference type="GO" id="GO:0004175">
    <property type="term" value="F:endopeptidase activity"/>
    <property type="evidence" value="ECO:0000318"/>
    <property type="project" value="GO_Central"/>
</dbReference>
<dbReference type="GO" id="GO:0006508">
    <property type="term" value="P:proteolysis"/>
    <property type="evidence" value="ECO:0007669"/>
    <property type="project" value="UniProtKB-KW"/>
</dbReference>
<dbReference type="HAMAP" id="MF_00161">
    <property type="entry name" value="LspA"/>
    <property type="match status" value="1"/>
</dbReference>
<dbReference type="InterPro" id="IPR001872">
    <property type="entry name" value="Peptidase_A8"/>
</dbReference>
<dbReference type="NCBIfam" id="TIGR00077">
    <property type="entry name" value="lspA"/>
    <property type="match status" value="1"/>
</dbReference>
<dbReference type="PANTHER" id="PTHR33695">
    <property type="entry name" value="LIPOPROTEIN SIGNAL PEPTIDASE"/>
    <property type="match status" value="1"/>
</dbReference>
<dbReference type="PANTHER" id="PTHR33695:SF1">
    <property type="entry name" value="LIPOPROTEIN SIGNAL PEPTIDASE"/>
    <property type="match status" value="1"/>
</dbReference>
<dbReference type="Pfam" id="PF01252">
    <property type="entry name" value="Peptidase_A8"/>
    <property type="match status" value="1"/>
</dbReference>
<dbReference type="PRINTS" id="PR00781">
    <property type="entry name" value="LIPOSIGPTASE"/>
</dbReference>
<dbReference type="PROSITE" id="PS00855">
    <property type="entry name" value="SPASE_II"/>
    <property type="match status" value="1"/>
</dbReference>
<gene>
    <name evidence="1" type="primary">lspA</name>
    <name type="ordered locus">glr0072</name>
</gene>
<sequence length="173" mass="18503">MSAKNPWFWLAAILAIALDRLTKVWVVAQLAPGESIALWPGVFHLTLVKNSGAAFSLFAGGSDWLKWISLLVSVGLCVYALVGPHLGSWEQMGFGLLLGGAVGNGFDRFAFGEVTDFLDFRLIQFPVFNGADIAINLGLACLLIGTLRSESRTPAPARPASKQIREPTDTTGG</sequence>
<reference key="1">
    <citation type="journal article" date="2003" name="DNA Res.">
        <title>Complete genome structure of Gloeobacter violaceus PCC 7421, a cyanobacterium that lacks thylakoids.</title>
        <authorList>
            <person name="Nakamura Y."/>
            <person name="Kaneko T."/>
            <person name="Sato S."/>
            <person name="Mimuro M."/>
            <person name="Miyashita H."/>
            <person name="Tsuchiya T."/>
            <person name="Sasamoto S."/>
            <person name="Watanabe A."/>
            <person name="Kawashima K."/>
            <person name="Kishida Y."/>
            <person name="Kiyokawa C."/>
            <person name="Kohara M."/>
            <person name="Matsumoto M."/>
            <person name="Matsuno A."/>
            <person name="Nakazaki N."/>
            <person name="Shimpo S."/>
            <person name="Takeuchi C."/>
            <person name="Yamada M."/>
            <person name="Tabata S."/>
        </authorList>
    </citation>
    <scope>NUCLEOTIDE SEQUENCE [LARGE SCALE GENOMIC DNA]</scope>
    <source>
        <strain>ATCC 29082 / PCC 7421</strain>
    </source>
</reference>
<organism>
    <name type="scientific">Gloeobacter violaceus (strain ATCC 29082 / PCC 7421)</name>
    <dbReference type="NCBI Taxonomy" id="251221"/>
    <lineage>
        <taxon>Bacteria</taxon>
        <taxon>Bacillati</taxon>
        <taxon>Cyanobacteriota</taxon>
        <taxon>Cyanophyceae</taxon>
        <taxon>Gloeobacterales</taxon>
        <taxon>Gloeobacteraceae</taxon>
        <taxon>Gloeobacter</taxon>
    </lineage>
</organism>
<keyword id="KW-0064">Aspartyl protease</keyword>
<keyword id="KW-0997">Cell inner membrane</keyword>
<keyword id="KW-1003">Cell membrane</keyword>
<keyword id="KW-0378">Hydrolase</keyword>
<keyword id="KW-0472">Membrane</keyword>
<keyword id="KW-0645">Protease</keyword>
<keyword id="KW-1185">Reference proteome</keyword>
<keyword id="KW-0812">Transmembrane</keyword>
<keyword id="KW-1133">Transmembrane helix</keyword>
<proteinExistence type="inferred from homology"/>
<evidence type="ECO:0000255" key="1">
    <source>
        <dbReference type="HAMAP-Rule" id="MF_00161"/>
    </source>
</evidence>
<evidence type="ECO:0000256" key="2">
    <source>
        <dbReference type="SAM" id="MobiDB-lite"/>
    </source>
</evidence>
<accession>Q7NPI3</accession>
<protein>
    <recommendedName>
        <fullName evidence="1">Lipoprotein signal peptidase</fullName>
        <ecNumber evidence="1">3.4.23.36</ecNumber>
    </recommendedName>
    <alternativeName>
        <fullName evidence="1">Prolipoprotein signal peptidase</fullName>
    </alternativeName>
    <alternativeName>
        <fullName evidence="1">Signal peptidase II</fullName>
        <shortName evidence="1">SPase II</shortName>
    </alternativeName>
</protein>
<comment type="function">
    <text evidence="1">This protein specifically catalyzes the removal of signal peptides from prolipoproteins.</text>
</comment>
<comment type="catalytic activity">
    <reaction evidence="1">
        <text>Release of signal peptides from bacterial membrane prolipoproteins. Hydrolyzes -Xaa-Yaa-Zaa-|-(S,diacylglyceryl)Cys-, in which Xaa is hydrophobic (preferably Leu), and Yaa (Ala or Ser) and Zaa (Gly or Ala) have small, neutral side chains.</text>
        <dbReference type="EC" id="3.4.23.36"/>
    </reaction>
</comment>
<comment type="pathway">
    <text evidence="1">Protein modification; lipoprotein biosynthesis (signal peptide cleavage).</text>
</comment>
<comment type="subcellular location">
    <subcellularLocation>
        <location evidence="1">Cell inner membrane</location>
        <topology evidence="1">Multi-pass membrane protein</topology>
    </subcellularLocation>
</comment>
<comment type="similarity">
    <text evidence="1">Belongs to the peptidase A8 family.</text>
</comment>
<name>LSPA_GLOVI</name>